<organism>
    <name type="scientific">Danio rerio</name>
    <name type="common">Zebrafish</name>
    <name type="synonym">Brachydanio rerio</name>
    <dbReference type="NCBI Taxonomy" id="7955"/>
    <lineage>
        <taxon>Eukaryota</taxon>
        <taxon>Metazoa</taxon>
        <taxon>Chordata</taxon>
        <taxon>Craniata</taxon>
        <taxon>Vertebrata</taxon>
        <taxon>Euteleostomi</taxon>
        <taxon>Actinopterygii</taxon>
        <taxon>Neopterygii</taxon>
        <taxon>Teleostei</taxon>
        <taxon>Ostariophysi</taxon>
        <taxon>Cypriniformes</taxon>
        <taxon>Danionidae</taxon>
        <taxon>Danioninae</taxon>
        <taxon>Danio</taxon>
    </lineage>
</organism>
<name>AMER1_DANRE</name>
<comment type="function">
    <text evidence="1">Regulator of the canonical Wnt signaling pathway. Acts by specifically binding phosphatidylinositol 4,5-bisphosphate (PtdIns(4,5)P2), translocating to the cell membrane and interacting with key regulators of the canonical Wnt signaling pathway, such as components of the beta-catenin destruction complex. Acts both as a positive and negative regulator of the Wnt signaling pathway, depending on the context (By similarity).</text>
</comment>
<comment type="subcellular location">
    <subcellularLocation>
        <location evidence="1">Cytoplasm</location>
    </subcellularLocation>
    <subcellularLocation>
        <location evidence="1">Cell membrane</location>
        <topology evidence="1">Peripheral membrane protein</topology>
        <orientation evidence="1">Cytoplasmic side</orientation>
    </subcellularLocation>
    <subcellularLocation>
        <location evidence="1">Nucleus</location>
    </subcellularLocation>
    <text evidence="1">Shuttles between nucleus and cytoplasm. Detected in nuclear paraspeckles that are found close to splicing speckles. Translocates to the cell membrane following binding to PtdIns(4,5)P2 (By similarity).</text>
</comment>
<comment type="similarity">
    <text evidence="3">Belongs to the Amer family.</text>
</comment>
<comment type="sequence caution" evidence="3">
    <conflict type="erroneous initiation">
        <sequence resource="EMBL-CDS" id="AAI55292"/>
    </conflict>
    <text>Extended N-terminus.</text>
</comment>
<sequence length="930" mass="102526">MEIATRCEVGAMRGPSSDSVSHDIPQPQSPPSVKIRKTAFKFFGGRKSICVLPSFFGGRGRSQRKGSSKTGVTKSQTYDGVSRACWDDLGRSSSEVASGDFEFCSEPQKSQEDHGKSQSLPRQRRGLRGLFSSIRRHRKNKNVEVEKREALEMSSSFHAKTVPGALPSVSDRGDYHGDSQGEELVPDVPNQTTGSECELPLAATECTIDVTLVPEKRRSRVEMDKRRRAEEEGIGEDEKTGRQEGLMTYHQPLSAESELDRLAEQNVDVPDGEPPVASCSSENLVFGDVSSLKSFDSLTGCGDIIADQDDVSVAESSVSADRGSRNAGKRSSCFVTYQGGGEEMATPDEIDADYLQSLWESETSNEVCYIPSDRGSDSPSLTPDQQLSSIRATSSSSPMGITETALTPADLLSPQSDRQESVPNSDEGYYDSTTPGMEEESRERPHQERLPRDSYSGDALYELFEPDDRLLSPSLPPKDAHSFVGAPLQADKSPTNPLYSLASTAIETGAMETEEERLSKIQHALLCCELQNLRSPSKNQLLFHSDCFYDDSNLPVDDSKQDLQEVINQRYPQSPPRSQAVKEGVPRIRGQVQESSLFAPCADSVLNPQVIETTRPQPQSDDQGSLRPSRGCSQSQEELMVCFSQALVDFTKNTRLYRNSTESLDGSESSSPFGPSLRALPAIVTFDVVDMENEGECEQQTDLAEEEEELASPYEPFEDDGCYLQQDAFAECDQRTFDAYEQSLLLSNAWGIASLPRHLSLGRPCPPVPAPLALNRRSRSLDTDSLEFQTSEIYTSVTKYDSKGTAFSQSRTVDCNDMDFPRQPCRITVDSWRRGYRQNFDSSNASQQELKLPHLSQSTVRPSHLPLKNNCRSRNLPAATRVDGEGEILFGGGDALYPCSYPPMGTQWKNRPVGVTQGVPHLRSEQSADH</sequence>
<protein>
    <recommendedName>
        <fullName>APC membrane recruitment protein 1</fullName>
        <shortName>Amer1</shortName>
    </recommendedName>
    <alternativeName>
        <fullName>Protein FAM123B</fullName>
    </alternativeName>
</protein>
<feature type="chain" id="PRO_0000416259" description="APC membrane recruitment protein 1">
    <location>
        <begin position="1"/>
        <end position="930"/>
    </location>
</feature>
<feature type="region of interest" description="Disordered" evidence="2">
    <location>
        <begin position="1"/>
        <end position="33"/>
    </location>
</feature>
<feature type="region of interest" description="Disordered" evidence="2">
    <location>
        <begin position="55"/>
        <end position="76"/>
    </location>
</feature>
<feature type="region of interest" description="Disordered" evidence="2">
    <location>
        <begin position="104"/>
        <end position="133"/>
    </location>
</feature>
<feature type="region of interest" description="Disordered" evidence="2">
    <location>
        <begin position="161"/>
        <end position="193"/>
    </location>
</feature>
<feature type="region of interest" description="Disordered" evidence="2">
    <location>
        <begin position="222"/>
        <end position="245"/>
    </location>
</feature>
<feature type="region of interest" description="Disordered" evidence="2">
    <location>
        <begin position="366"/>
        <end position="454"/>
    </location>
</feature>
<feature type="compositionally biased region" description="Basic and acidic residues" evidence="2">
    <location>
        <begin position="222"/>
        <end position="242"/>
    </location>
</feature>
<feature type="compositionally biased region" description="Polar residues" evidence="2">
    <location>
        <begin position="377"/>
        <end position="399"/>
    </location>
</feature>
<feature type="compositionally biased region" description="Polar residues" evidence="2">
    <location>
        <begin position="413"/>
        <end position="424"/>
    </location>
</feature>
<feature type="compositionally biased region" description="Basic and acidic residues" evidence="2">
    <location>
        <begin position="439"/>
        <end position="452"/>
    </location>
</feature>
<feature type="sequence conflict" description="In Ref. 2; AAI55292." evidence="3" ref="2">
    <original>E</original>
    <variation>K</variation>
    <location>
        <position position="231"/>
    </location>
</feature>
<evidence type="ECO:0000250" key="1"/>
<evidence type="ECO:0000256" key="2">
    <source>
        <dbReference type="SAM" id="MobiDB-lite"/>
    </source>
</evidence>
<evidence type="ECO:0000305" key="3"/>
<accession>F1RDM5</accession>
<accession>A9JTD0</accession>
<reference key="1">
    <citation type="journal article" date="2013" name="Nature">
        <title>The zebrafish reference genome sequence and its relationship to the human genome.</title>
        <authorList>
            <person name="Howe K."/>
            <person name="Clark M.D."/>
            <person name="Torroja C.F."/>
            <person name="Torrance J."/>
            <person name="Berthelot C."/>
            <person name="Muffato M."/>
            <person name="Collins J.E."/>
            <person name="Humphray S."/>
            <person name="McLaren K."/>
            <person name="Matthews L."/>
            <person name="McLaren S."/>
            <person name="Sealy I."/>
            <person name="Caccamo M."/>
            <person name="Churcher C."/>
            <person name="Scott C."/>
            <person name="Barrett J.C."/>
            <person name="Koch R."/>
            <person name="Rauch G.J."/>
            <person name="White S."/>
            <person name="Chow W."/>
            <person name="Kilian B."/>
            <person name="Quintais L.T."/>
            <person name="Guerra-Assuncao J.A."/>
            <person name="Zhou Y."/>
            <person name="Gu Y."/>
            <person name="Yen J."/>
            <person name="Vogel J.H."/>
            <person name="Eyre T."/>
            <person name="Redmond S."/>
            <person name="Banerjee R."/>
            <person name="Chi J."/>
            <person name="Fu B."/>
            <person name="Langley E."/>
            <person name="Maguire S.F."/>
            <person name="Laird G.K."/>
            <person name="Lloyd D."/>
            <person name="Kenyon E."/>
            <person name="Donaldson S."/>
            <person name="Sehra H."/>
            <person name="Almeida-King J."/>
            <person name="Loveland J."/>
            <person name="Trevanion S."/>
            <person name="Jones M."/>
            <person name="Quail M."/>
            <person name="Willey D."/>
            <person name="Hunt A."/>
            <person name="Burton J."/>
            <person name="Sims S."/>
            <person name="McLay K."/>
            <person name="Plumb B."/>
            <person name="Davis J."/>
            <person name="Clee C."/>
            <person name="Oliver K."/>
            <person name="Clark R."/>
            <person name="Riddle C."/>
            <person name="Elliot D."/>
            <person name="Threadgold G."/>
            <person name="Harden G."/>
            <person name="Ware D."/>
            <person name="Begum S."/>
            <person name="Mortimore B."/>
            <person name="Kerry G."/>
            <person name="Heath P."/>
            <person name="Phillimore B."/>
            <person name="Tracey A."/>
            <person name="Corby N."/>
            <person name="Dunn M."/>
            <person name="Johnson C."/>
            <person name="Wood J."/>
            <person name="Clark S."/>
            <person name="Pelan S."/>
            <person name="Griffiths G."/>
            <person name="Smith M."/>
            <person name="Glithero R."/>
            <person name="Howden P."/>
            <person name="Barker N."/>
            <person name="Lloyd C."/>
            <person name="Stevens C."/>
            <person name="Harley J."/>
            <person name="Holt K."/>
            <person name="Panagiotidis G."/>
            <person name="Lovell J."/>
            <person name="Beasley H."/>
            <person name="Henderson C."/>
            <person name="Gordon D."/>
            <person name="Auger K."/>
            <person name="Wright D."/>
            <person name="Collins J."/>
            <person name="Raisen C."/>
            <person name="Dyer L."/>
            <person name="Leung K."/>
            <person name="Robertson L."/>
            <person name="Ambridge K."/>
            <person name="Leongamornlert D."/>
            <person name="McGuire S."/>
            <person name="Gilderthorp R."/>
            <person name="Griffiths C."/>
            <person name="Manthravadi D."/>
            <person name="Nichol S."/>
            <person name="Barker G."/>
            <person name="Whitehead S."/>
            <person name="Kay M."/>
            <person name="Brown J."/>
            <person name="Murnane C."/>
            <person name="Gray E."/>
            <person name="Humphries M."/>
            <person name="Sycamore N."/>
            <person name="Barker D."/>
            <person name="Saunders D."/>
            <person name="Wallis J."/>
            <person name="Babbage A."/>
            <person name="Hammond S."/>
            <person name="Mashreghi-Mohammadi M."/>
            <person name="Barr L."/>
            <person name="Martin S."/>
            <person name="Wray P."/>
            <person name="Ellington A."/>
            <person name="Matthews N."/>
            <person name="Ellwood M."/>
            <person name="Woodmansey R."/>
            <person name="Clark G."/>
            <person name="Cooper J."/>
            <person name="Tromans A."/>
            <person name="Grafham D."/>
            <person name="Skuce C."/>
            <person name="Pandian R."/>
            <person name="Andrews R."/>
            <person name="Harrison E."/>
            <person name="Kimberley A."/>
            <person name="Garnett J."/>
            <person name="Fosker N."/>
            <person name="Hall R."/>
            <person name="Garner P."/>
            <person name="Kelly D."/>
            <person name="Bird C."/>
            <person name="Palmer S."/>
            <person name="Gehring I."/>
            <person name="Berger A."/>
            <person name="Dooley C.M."/>
            <person name="Ersan-Urun Z."/>
            <person name="Eser C."/>
            <person name="Geiger H."/>
            <person name="Geisler M."/>
            <person name="Karotki L."/>
            <person name="Kirn A."/>
            <person name="Konantz J."/>
            <person name="Konantz M."/>
            <person name="Oberlander M."/>
            <person name="Rudolph-Geiger S."/>
            <person name="Teucke M."/>
            <person name="Lanz C."/>
            <person name="Raddatz G."/>
            <person name="Osoegawa K."/>
            <person name="Zhu B."/>
            <person name="Rapp A."/>
            <person name="Widaa S."/>
            <person name="Langford C."/>
            <person name="Yang F."/>
            <person name="Schuster S.C."/>
            <person name="Carter N.P."/>
            <person name="Harrow J."/>
            <person name="Ning Z."/>
            <person name="Herrero J."/>
            <person name="Searle S.M."/>
            <person name="Enright A."/>
            <person name="Geisler R."/>
            <person name="Plasterk R.H."/>
            <person name="Lee C."/>
            <person name="Westerfield M."/>
            <person name="de Jong P.J."/>
            <person name="Zon L.I."/>
            <person name="Postlethwait J.H."/>
            <person name="Nusslein-Volhard C."/>
            <person name="Hubbard T.J."/>
            <person name="Roest Crollius H."/>
            <person name="Rogers J."/>
            <person name="Stemple D.L."/>
        </authorList>
    </citation>
    <scope>NUCLEOTIDE SEQUENCE [LARGE SCALE GENOMIC DNA]</scope>
    <source>
        <strain>Tuebingen</strain>
    </source>
</reference>
<reference key="2">
    <citation type="submission" date="2007-11" db="EMBL/GenBank/DDBJ databases">
        <authorList>
            <consortium name="NIH - Zebrafish Gene Collection (ZGC) project"/>
        </authorList>
    </citation>
    <scope>NUCLEOTIDE SEQUENCE [LARGE SCALE MRNA]</scope>
    <source>
        <tissue>Embryo</tissue>
    </source>
</reference>
<gene>
    <name type="primary">amer1</name>
    <name type="synonym">fam123b</name>
</gene>
<dbReference type="EMBL" id="CR812469">
    <property type="status" value="NOT_ANNOTATED_CDS"/>
    <property type="molecule type" value="Genomic_DNA"/>
</dbReference>
<dbReference type="EMBL" id="BC155291">
    <property type="protein sequence ID" value="AAI55292.1"/>
    <property type="status" value="ALT_INIT"/>
    <property type="molecule type" value="mRNA"/>
</dbReference>
<dbReference type="FunCoup" id="F1RDM5">
    <property type="interactions" value="1680"/>
</dbReference>
<dbReference type="STRING" id="7955.ENSDARP00000099285"/>
<dbReference type="PaxDb" id="7955-ENSDARP00000099285"/>
<dbReference type="AGR" id="ZFIN:ZDB-GENE-070719-2"/>
<dbReference type="ZFIN" id="ZDB-GENE-070719-2">
    <property type="gene designation" value="amer1"/>
</dbReference>
<dbReference type="eggNOG" id="ENOG502QT5W">
    <property type="taxonomic scope" value="Eukaryota"/>
</dbReference>
<dbReference type="HOGENOM" id="CLU_009351_1_0_1"/>
<dbReference type="InParanoid" id="F1RDM5"/>
<dbReference type="TreeFam" id="TF333006"/>
<dbReference type="PRO" id="PR:F1RDM5"/>
<dbReference type="Proteomes" id="UP000000437">
    <property type="component" value="Unplaced"/>
</dbReference>
<dbReference type="GO" id="GO:0005737">
    <property type="term" value="C:cytoplasm"/>
    <property type="evidence" value="ECO:0007669"/>
    <property type="project" value="UniProtKB-SubCell"/>
</dbReference>
<dbReference type="GO" id="GO:0005634">
    <property type="term" value="C:nucleus"/>
    <property type="evidence" value="ECO:0007669"/>
    <property type="project" value="UniProtKB-SubCell"/>
</dbReference>
<dbReference type="GO" id="GO:0005886">
    <property type="term" value="C:plasma membrane"/>
    <property type="evidence" value="ECO:0000250"/>
    <property type="project" value="UniProtKB"/>
</dbReference>
<dbReference type="GO" id="GO:0008013">
    <property type="term" value="F:beta-catenin binding"/>
    <property type="evidence" value="ECO:0000250"/>
    <property type="project" value="UniProtKB"/>
</dbReference>
<dbReference type="GO" id="GO:0005546">
    <property type="term" value="F:phosphatidylinositol-4,5-bisphosphate binding"/>
    <property type="evidence" value="ECO:0000250"/>
    <property type="project" value="UniProtKB"/>
</dbReference>
<dbReference type="GO" id="GO:0090090">
    <property type="term" value="P:negative regulation of canonical Wnt signaling pathway"/>
    <property type="evidence" value="ECO:0000250"/>
    <property type="project" value="UniProtKB"/>
</dbReference>
<dbReference type="GO" id="GO:0030178">
    <property type="term" value="P:negative regulation of Wnt signaling pathway"/>
    <property type="evidence" value="ECO:0000316"/>
    <property type="project" value="ZFIN"/>
</dbReference>
<dbReference type="GO" id="GO:0090263">
    <property type="term" value="P:positive regulation of canonical Wnt signaling pathway"/>
    <property type="evidence" value="ECO:0000250"/>
    <property type="project" value="UniProtKB"/>
</dbReference>
<dbReference type="GO" id="GO:0060828">
    <property type="term" value="P:regulation of canonical Wnt signaling pathway"/>
    <property type="evidence" value="ECO:0000250"/>
    <property type="project" value="UniProtKB"/>
</dbReference>
<dbReference type="GO" id="GO:0016055">
    <property type="term" value="P:Wnt signaling pathway"/>
    <property type="evidence" value="ECO:0007669"/>
    <property type="project" value="UniProtKB-KW"/>
</dbReference>
<dbReference type="InterPro" id="IPR019003">
    <property type="entry name" value="AMER"/>
</dbReference>
<dbReference type="PANTHER" id="PTHR22237:SF0">
    <property type="entry name" value="APC MEMBRANE RECRUITMENT PROTEIN 1"/>
    <property type="match status" value="1"/>
</dbReference>
<dbReference type="PANTHER" id="PTHR22237">
    <property type="entry name" value="APC MEMBRANE RECRUITMENT PROTEIN 2-RELATED"/>
    <property type="match status" value="1"/>
</dbReference>
<dbReference type="Pfam" id="PF09422">
    <property type="entry name" value="AMER"/>
    <property type="match status" value="1"/>
</dbReference>
<keyword id="KW-1003">Cell membrane</keyword>
<keyword id="KW-0963">Cytoplasm</keyword>
<keyword id="KW-0446">Lipid-binding</keyword>
<keyword id="KW-0472">Membrane</keyword>
<keyword id="KW-0539">Nucleus</keyword>
<keyword id="KW-1185">Reference proteome</keyword>
<keyword id="KW-0879">Wnt signaling pathway</keyword>
<proteinExistence type="evidence at transcript level"/>